<comment type="function">
    <text evidence="1">Specifically methylates the N4 position of cytidine in position 1402 (C1402) of 16S rRNA.</text>
</comment>
<comment type="catalytic activity">
    <reaction evidence="1">
        <text>cytidine(1402) in 16S rRNA + S-adenosyl-L-methionine = N(4)-methylcytidine(1402) in 16S rRNA + S-adenosyl-L-homocysteine + H(+)</text>
        <dbReference type="Rhea" id="RHEA:42928"/>
        <dbReference type="Rhea" id="RHEA-COMP:10286"/>
        <dbReference type="Rhea" id="RHEA-COMP:10287"/>
        <dbReference type="ChEBI" id="CHEBI:15378"/>
        <dbReference type="ChEBI" id="CHEBI:57856"/>
        <dbReference type="ChEBI" id="CHEBI:59789"/>
        <dbReference type="ChEBI" id="CHEBI:74506"/>
        <dbReference type="ChEBI" id="CHEBI:82748"/>
        <dbReference type="EC" id="2.1.1.199"/>
    </reaction>
</comment>
<comment type="subcellular location">
    <subcellularLocation>
        <location evidence="1">Cytoplasm</location>
    </subcellularLocation>
</comment>
<comment type="similarity">
    <text evidence="1">Belongs to the methyltransferase superfamily. RsmH family.</text>
</comment>
<gene>
    <name evidence="1" type="primary">rsmH</name>
    <name type="synonym">mraW</name>
    <name type="ordered locus">CLJ_B1556</name>
</gene>
<name>RSMH_CLOB6</name>
<reference key="1">
    <citation type="submission" date="2008-05" db="EMBL/GenBank/DDBJ databases">
        <title>Genome sequence of Clostridium botulinum Ba4 strain 657.</title>
        <authorList>
            <person name="Shrivastava S."/>
            <person name="Brown J.L."/>
            <person name="Bruce D."/>
            <person name="Detter C."/>
            <person name="Munk C."/>
            <person name="Smith L.A."/>
            <person name="Smith T.J."/>
            <person name="Sutton G."/>
            <person name="Brettin T.S."/>
        </authorList>
    </citation>
    <scope>NUCLEOTIDE SEQUENCE [LARGE SCALE GENOMIC DNA]</scope>
    <source>
        <strain>657 / Type Ba4</strain>
    </source>
</reference>
<sequence>MEFKHISVLLEETIDSLNIKEDGVYVDCTLGGGGHSKEILKKLSHKGKLIGIDQDTSAIKAAKERLKDYENVIYVHNNFYNIDSILEELDIDKVDGIIMDLGVSSYQLDEASRGFSYMKDAPLDMRMNREENLSAYGVINNYKEEELFKILKNYGEEKFSRKIARFIVEKRTENPIETTGELVEIIRKAIPAKFQREGHPAKRTFQAIRIEVNKELQILNKAIEDSVNRLNKDGRLSIITFHSLEDRIVKVKFKELEKPCTCPPSFPICVCGKEPQIKIITKKPIEPSKEEKEINSRSRSAKLRVCRKI</sequence>
<accession>C3KV90</accession>
<dbReference type="EC" id="2.1.1.199" evidence="1"/>
<dbReference type="EMBL" id="CP001083">
    <property type="protein sequence ID" value="ACQ53982.1"/>
    <property type="molecule type" value="Genomic_DNA"/>
</dbReference>
<dbReference type="RefSeq" id="WP_003360690.1">
    <property type="nucleotide sequence ID" value="NC_012658.1"/>
</dbReference>
<dbReference type="SMR" id="C3KV90"/>
<dbReference type="KEGG" id="cbi:CLJ_B1556"/>
<dbReference type="HOGENOM" id="CLU_038422_2_0_9"/>
<dbReference type="Proteomes" id="UP000002333">
    <property type="component" value="Chromosome"/>
</dbReference>
<dbReference type="GO" id="GO:0005737">
    <property type="term" value="C:cytoplasm"/>
    <property type="evidence" value="ECO:0007669"/>
    <property type="project" value="UniProtKB-SubCell"/>
</dbReference>
<dbReference type="GO" id="GO:0071424">
    <property type="term" value="F:rRNA (cytosine-N4-)-methyltransferase activity"/>
    <property type="evidence" value="ECO:0007669"/>
    <property type="project" value="UniProtKB-UniRule"/>
</dbReference>
<dbReference type="GO" id="GO:0070475">
    <property type="term" value="P:rRNA base methylation"/>
    <property type="evidence" value="ECO:0007669"/>
    <property type="project" value="UniProtKB-UniRule"/>
</dbReference>
<dbReference type="FunFam" id="1.10.150.170:FF:000001">
    <property type="entry name" value="Ribosomal RNA small subunit methyltransferase H"/>
    <property type="match status" value="1"/>
</dbReference>
<dbReference type="Gene3D" id="1.10.150.170">
    <property type="entry name" value="Putative methyltransferase TM0872, insert domain"/>
    <property type="match status" value="1"/>
</dbReference>
<dbReference type="Gene3D" id="3.40.50.150">
    <property type="entry name" value="Vaccinia Virus protein VP39"/>
    <property type="match status" value="1"/>
</dbReference>
<dbReference type="HAMAP" id="MF_01007">
    <property type="entry name" value="16SrRNA_methyltr_H"/>
    <property type="match status" value="1"/>
</dbReference>
<dbReference type="InterPro" id="IPR002903">
    <property type="entry name" value="RsmH"/>
</dbReference>
<dbReference type="InterPro" id="IPR023397">
    <property type="entry name" value="SAM-dep_MeTrfase_MraW_recog"/>
</dbReference>
<dbReference type="InterPro" id="IPR029063">
    <property type="entry name" value="SAM-dependent_MTases_sf"/>
</dbReference>
<dbReference type="NCBIfam" id="TIGR00006">
    <property type="entry name" value="16S rRNA (cytosine(1402)-N(4))-methyltransferase RsmH"/>
    <property type="match status" value="1"/>
</dbReference>
<dbReference type="PANTHER" id="PTHR11265:SF0">
    <property type="entry name" value="12S RRNA N4-METHYLCYTIDINE METHYLTRANSFERASE"/>
    <property type="match status" value="1"/>
</dbReference>
<dbReference type="PANTHER" id="PTHR11265">
    <property type="entry name" value="S-ADENOSYL-METHYLTRANSFERASE MRAW"/>
    <property type="match status" value="1"/>
</dbReference>
<dbReference type="Pfam" id="PF01795">
    <property type="entry name" value="Methyltransf_5"/>
    <property type="match status" value="1"/>
</dbReference>
<dbReference type="PIRSF" id="PIRSF004486">
    <property type="entry name" value="MraW"/>
    <property type="match status" value="1"/>
</dbReference>
<dbReference type="SUPFAM" id="SSF81799">
    <property type="entry name" value="Putative methyltransferase TM0872, insert domain"/>
    <property type="match status" value="1"/>
</dbReference>
<dbReference type="SUPFAM" id="SSF53335">
    <property type="entry name" value="S-adenosyl-L-methionine-dependent methyltransferases"/>
    <property type="match status" value="1"/>
</dbReference>
<protein>
    <recommendedName>
        <fullName evidence="1">Ribosomal RNA small subunit methyltransferase H</fullName>
        <ecNumber evidence="1">2.1.1.199</ecNumber>
    </recommendedName>
    <alternativeName>
        <fullName evidence="1">16S rRNA m(4)C1402 methyltransferase</fullName>
    </alternativeName>
    <alternativeName>
        <fullName evidence="1">rRNA (cytosine-N(4)-)-methyltransferase RsmH</fullName>
    </alternativeName>
</protein>
<proteinExistence type="inferred from homology"/>
<organism>
    <name type="scientific">Clostridium botulinum (strain 657 / Type Ba4)</name>
    <dbReference type="NCBI Taxonomy" id="515621"/>
    <lineage>
        <taxon>Bacteria</taxon>
        <taxon>Bacillati</taxon>
        <taxon>Bacillota</taxon>
        <taxon>Clostridia</taxon>
        <taxon>Eubacteriales</taxon>
        <taxon>Clostridiaceae</taxon>
        <taxon>Clostridium</taxon>
    </lineage>
</organism>
<feature type="chain" id="PRO_0000386810" description="Ribosomal RNA small subunit methyltransferase H">
    <location>
        <begin position="1"/>
        <end position="309"/>
    </location>
</feature>
<feature type="binding site" evidence="1">
    <location>
        <begin position="33"/>
        <end position="35"/>
    </location>
    <ligand>
        <name>S-adenosyl-L-methionine</name>
        <dbReference type="ChEBI" id="CHEBI:59789"/>
    </ligand>
</feature>
<feature type="binding site" evidence="1">
    <location>
        <position position="53"/>
    </location>
    <ligand>
        <name>S-adenosyl-L-methionine</name>
        <dbReference type="ChEBI" id="CHEBI:59789"/>
    </ligand>
</feature>
<feature type="binding site" evidence="1">
    <location>
        <position position="79"/>
    </location>
    <ligand>
        <name>S-adenosyl-L-methionine</name>
        <dbReference type="ChEBI" id="CHEBI:59789"/>
    </ligand>
</feature>
<feature type="binding site" evidence="1">
    <location>
        <position position="100"/>
    </location>
    <ligand>
        <name>S-adenosyl-L-methionine</name>
        <dbReference type="ChEBI" id="CHEBI:59789"/>
    </ligand>
</feature>
<feature type="binding site" evidence="1">
    <location>
        <position position="107"/>
    </location>
    <ligand>
        <name>S-adenosyl-L-methionine</name>
        <dbReference type="ChEBI" id="CHEBI:59789"/>
    </ligand>
</feature>
<evidence type="ECO:0000255" key="1">
    <source>
        <dbReference type="HAMAP-Rule" id="MF_01007"/>
    </source>
</evidence>
<keyword id="KW-0963">Cytoplasm</keyword>
<keyword id="KW-0489">Methyltransferase</keyword>
<keyword id="KW-0698">rRNA processing</keyword>
<keyword id="KW-0949">S-adenosyl-L-methionine</keyword>
<keyword id="KW-0808">Transferase</keyword>